<organism>
    <name type="scientific">Aeropyrum pernix (strain ATCC 700893 / DSM 11879 / JCM 9820 / NBRC 100138 / K1)</name>
    <dbReference type="NCBI Taxonomy" id="272557"/>
    <lineage>
        <taxon>Archaea</taxon>
        <taxon>Thermoproteota</taxon>
        <taxon>Thermoprotei</taxon>
        <taxon>Desulfurococcales</taxon>
        <taxon>Desulfurococcaceae</taxon>
        <taxon>Aeropyrum</taxon>
    </lineage>
</organism>
<evidence type="ECO:0000255" key="1">
    <source>
        <dbReference type="HAMAP-Rule" id="MF_00306"/>
    </source>
</evidence>
<evidence type="ECO:0007829" key="2">
    <source>
        <dbReference type="PDB" id="7EPK"/>
    </source>
</evidence>
<reference key="1">
    <citation type="journal article" date="1999" name="DNA Res.">
        <title>Complete genome sequence of an aerobic hyper-thermophilic crenarchaeon, Aeropyrum pernix K1.</title>
        <authorList>
            <person name="Kawarabayasi Y."/>
            <person name="Hino Y."/>
            <person name="Horikawa H."/>
            <person name="Yamazaki S."/>
            <person name="Haikawa Y."/>
            <person name="Jin-no K."/>
            <person name="Takahashi M."/>
            <person name="Sekine M."/>
            <person name="Baba S."/>
            <person name="Ankai A."/>
            <person name="Kosugi H."/>
            <person name="Hosoyama A."/>
            <person name="Fukui S."/>
            <person name="Nagai Y."/>
            <person name="Nishijima K."/>
            <person name="Nakazawa H."/>
            <person name="Takamiya M."/>
            <person name="Masuda S."/>
            <person name="Funahashi T."/>
            <person name="Tanaka T."/>
            <person name="Kudoh Y."/>
            <person name="Yamazaki J."/>
            <person name="Kushida N."/>
            <person name="Oguchi A."/>
            <person name="Aoki K."/>
            <person name="Kubota K."/>
            <person name="Nakamura Y."/>
            <person name="Nomura N."/>
            <person name="Sako Y."/>
            <person name="Kikuchi H."/>
        </authorList>
    </citation>
    <scope>NUCLEOTIDE SEQUENCE [LARGE SCALE GENOMIC DNA]</scope>
    <source>
        <strain>ATCC 700893 / DSM 11879 / JCM 9820 / NBRC 100138 / K1</strain>
    </source>
</reference>
<gene>
    <name evidence="1" type="primary">srp54</name>
    <name type="ordered locus">APE_1735</name>
</gene>
<name>SRP54_AERPE</name>
<keyword id="KW-0002">3D-structure</keyword>
<keyword id="KW-0963">Cytoplasm</keyword>
<keyword id="KW-0342">GTP-binding</keyword>
<keyword id="KW-0378">Hydrolase</keyword>
<keyword id="KW-0547">Nucleotide-binding</keyword>
<keyword id="KW-1185">Reference proteome</keyword>
<keyword id="KW-0687">Ribonucleoprotein</keyword>
<keyword id="KW-0694">RNA-binding</keyword>
<keyword id="KW-0733">Signal recognition particle</keyword>
<protein>
    <recommendedName>
        <fullName evidence="1">Signal recognition particle 54 kDa protein</fullName>
        <shortName evidence="1">SRP54</shortName>
        <ecNumber evidence="1">3.6.5.4</ecNumber>
    </recommendedName>
</protein>
<sequence length="441" mass="49114">MMEGVRRAVAKFLRGGGVYEKAVDAFVKDLQRELIKADVNVKLVLNVTRRIKERALKEEPPPGVTRRDWMIKIVYEELVKLFGGDQEPQVDPPKTPWIVLLVGVQGSGKTTTAGKLAYYYVRRGYKVGLVSSDTHRPGAYEQLKRLAEEAGAMFYGEREGDPAEIARRGLEDLLSRGAEIVIVDTAGRHGHGEEARLLDEMKAIASKVRPDEVALVIDASIGQKAMGLAERFHKSTPIGSIIVTKMDGTARGGGALTAAAVTGARIKFIGTGETLGELEPFAPRRFVARILGMGDLESLLERIKSLEEAGELDRAAEDVLKGRITMRTIYRQLRAMRKLGPLGKVLQMLPGASMLASIDEGALKLGEEKMKRWMAIIESMTYEELDRPEIIDKRRMRRIAIGSGTSVDDVRELLVYYKNLKTMMKKLKRDKRLLRRLGMEL</sequence>
<proteinExistence type="evidence at protein level"/>
<accession>Q9YB62</accession>
<feature type="chain" id="PRO_0000101172" description="Signal recognition particle 54 kDa protein">
    <location>
        <begin position="1"/>
        <end position="441"/>
    </location>
</feature>
<feature type="binding site" evidence="1">
    <location>
        <begin position="103"/>
        <end position="110"/>
    </location>
    <ligand>
        <name>GTP</name>
        <dbReference type="ChEBI" id="CHEBI:37565"/>
    </ligand>
</feature>
<feature type="binding site" evidence="1">
    <location>
        <begin position="184"/>
        <end position="188"/>
    </location>
    <ligand>
        <name>GTP</name>
        <dbReference type="ChEBI" id="CHEBI:37565"/>
    </ligand>
</feature>
<feature type="binding site" evidence="1">
    <location>
        <begin position="244"/>
        <end position="247"/>
    </location>
    <ligand>
        <name>GTP</name>
        <dbReference type="ChEBI" id="CHEBI:37565"/>
    </ligand>
</feature>
<feature type="helix" evidence="2">
    <location>
        <begin position="4"/>
        <end position="13"/>
    </location>
</feature>
<feature type="helix" evidence="2">
    <location>
        <begin position="19"/>
        <end position="36"/>
    </location>
</feature>
<feature type="helix" evidence="2">
    <location>
        <begin position="41"/>
        <end position="57"/>
    </location>
</feature>
<feature type="helix" evidence="2">
    <location>
        <begin position="66"/>
        <end position="81"/>
    </location>
</feature>
<feature type="strand" evidence="2">
    <location>
        <begin position="93"/>
        <end position="102"/>
    </location>
</feature>
<feature type="helix" evidence="2">
    <location>
        <begin position="109"/>
        <end position="122"/>
    </location>
</feature>
<feature type="strand" evidence="2">
    <location>
        <begin position="127"/>
        <end position="131"/>
    </location>
</feature>
<feature type="helix" evidence="2">
    <location>
        <begin position="139"/>
        <end position="150"/>
    </location>
</feature>
<feature type="strand" evidence="2">
    <location>
        <begin position="153"/>
        <end position="156"/>
    </location>
</feature>
<feature type="strand" evidence="2">
    <location>
        <begin position="158"/>
        <end position="160"/>
    </location>
</feature>
<feature type="helix" evidence="2">
    <location>
        <begin position="162"/>
        <end position="175"/>
    </location>
</feature>
<feature type="strand" evidence="2">
    <location>
        <begin position="179"/>
        <end position="184"/>
    </location>
</feature>
<feature type="turn" evidence="2">
    <location>
        <begin position="190"/>
        <end position="192"/>
    </location>
</feature>
<feature type="helix" evidence="2">
    <location>
        <begin position="194"/>
        <end position="208"/>
    </location>
</feature>
<feature type="strand" evidence="2">
    <location>
        <begin position="211"/>
        <end position="218"/>
    </location>
</feature>
<feature type="turn" evidence="2">
    <location>
        <begin position="222"/>
        <end position="224"/>
    </location>
</feature>
<feature type="helix" evidence="2">
    <location>
        <begin position="225"/>
        <end position="235"/>
    </location>
</feature>
<feature type="strand" evidence="2">
    <location>
        <begin position="240"/>
        <end position="244"/>
    </location>
</feature>
<feature type="strand" evidence="2">
    <location>
        <begin position="247"/>
        <end position="249"/>
    </location>
</feature>
<feature type="helix" evidence="2">
    <location>
        <begin position="255"/>
        <end position="262"/>
    </location>
</feature>
<feature type="strand" evidence="2">
    <location>
        <begin position="265"/>
        <end position="270"/>
    </location>
</feature>
<feature type="strand" evidence="2">
    <location>
        <begin position="272"/>
        <end position="274"/>
    </location>
</feature>
<feature type="strand" evidence="2">
    <location>
        <begin position="278"/>
        <end position="280"/>
    </location>
</feature>
<feature type="helix" evidence="2">
    <location>
        <begin position="283"/>
        <end position="291"/>
    </location>
</feature>
<feature type="helix" evidence="2">
    <location>
        <begin position="293"/>
        <end position="320"/>
    </location>
</feature>
<feature type="helix" evidence="2">
    <location>
        <begin position="326"/>
        <end position="337"/>
    </location>
</feature>
<feature type="strand" evidence="2">
    <location>
        <begin position="344"/>
        <end position="346"/>
    </location>
</feature>
<feature type="helix" evidence="2">
    <location>
        <begin position="350"/>
        <end position="356"/>
    </location>
</feature>
<feature type="helix" evidence="2">
    <location>
        <begin position="360"/>
        <end position="362"/>
    </location>
</feature>
<feature type="helix" evidence="2">
    <location>
        <begin position="367"/>
        <end position="379"/>
    </location>
</feature>
<feature type="helix" evidence="2">
    <location>
        <begin position="382"/>
        <end position="386"/>
    </location>
</feature>
<feature type="helix" evidence="2">
    <location>
        <begin position="388"/>
        <end position="390"/>
    </location>
</feature>
<feature type="helix" evidence="2">
    <location>
        <begin position="393"/>
        <end position="402"/>
    </location>
</feature>
<feature type="helix" evidence="2">
    <location>
        <begin position="409"/>
        <end position="423"/>
    </location>
</feature>
<comment type="function">
    <text evidence="1">Involved in targeting and insertion of nascent membrane proteins into the cytoplasmic membrane. Binds to the hydrophobic signal sequence of the ribosome-nascent chain (RNC) as it emerges from the ribosomes. The SRP-RNC complex is then targeted to the cytoplasmic membrane where it interacts with the SRP receptor FtsY.</text>
</comment>
<comment type="catalytic activity">
    <reaction evidence="1">
        <text>GTP + H2O = GDP + phosphate + H(+)</text>
        <dbReference type="Rhea" id="RHEA:19669"/>
        <dbReference type="ChEBI" id="CHEBI:15377"/>
        <dbReference type="ChEBI" id="CHEBI:15378"/>
        <dbReference type="ChEBI" id="CHEBI:37565"/>
        <dbReference type="ChEBI" id="CHEBI:43474"/>
        <dbReference type="ChEBI" id="CHEBI:58189"/>
        <dbReference type="EC" id="3.6.5.4"/>
    </reaction>
</comment>
<comment type="subunit">
    <text evidence="1">Part of the signal recognition particle protein translocation system, which is composed of SRP and FtsY. Archaeal SRP consists of a 7S RNA molecule of 300 nucleotides and two protein subunits: SRP54 and SRP19.</text>
</comment>
<comment type="subcellular location">
    <subcellularLocation>
        <location evidence="1">Cytoplasm</location>
    </subcellularLocation>
    <text evidence="1">The SRP-RNC complex is targeted to the cytoplasmic membrane.</text>
</comment>
<comment type="domain">
    <text evidence="1">Composed of three domains: the N-terminal N domain, which is responsible for interactions with the ribosome, the central G domain, which binds GTP, and the C-terminal M domain, which binds the RNA and the signal sequence of the RNC.</text>
</comment>
<comment type="similarity">
    <text evidence="1">Belongs to the GTP-binding SRP family. SRP54 subfamily.</text>
</comment>
<dbReference type="EC" id="3.6.5.4" evidence="1"/>
<dbReference type="EMBL" id="BA000002">
    <property type="protein sequence ID" value="BAA80736.1"/>
    <property type="molecule type" value="Genomic_DNA"/>
</dbReference>
<dbReference type="PIR" id="C72556">
    <property type="entry name" value="C72556"/>
</dbReference>
<dbReference type="RefSeq" id="WP_010866563.1">
    <property type="nucleotide sequence ID" value="NC_000854.2"/>
</dbReference>
<dbReference type="PDB" id="7EPK">
    <property type="method" value="X-ray"/>
    <property type="resolution" value="2.70 A"/>
    <property type="chains" value="A=1-441"/>
</dbReference>
<dbReference type="PDBsum" id="7EPK"/>
<dbReference type="SMR" id="Q9YB62"/>
<dbReference type="STRING" id="272557.APE_1735"/>
<dbReference type="EnsemblBacteria" id="BAA80736">
    <property type="protein sequence ID" value="BAA80736"/>
    <property type="gene ID" value="APE_1735"/>
</dbReference>
<dbReference type="GeneID" id="1446207"/>
<dbReference type="KEGG" id="ape:APE_1735"/>
<dbReference type="PATRIC" id="fig|272557.25.peg.1168"/>
<dbReference type="eggNOG" id="arCOG01228">
    <property type="taxonomic scope" value="Archaea"/>
</dbReference>
<dbReference type="Proteomes" id="UP000002518">
    <property type="component" value="Chromosome"/>
</dbReference>
<dbReference type="GO" id="GO:0048500">
    <property type="term" value="C:signal recognition particle"/>
    <property type="evidence" value="ECO:0007669"/>
    <property type="project" value="UniProtKB-UniRule"/>
</dbReference>
<dbReference type="GO" id="GO:0008312">
    <property type="term" value="F:7S RNA binding"/>
    <property type="evidence" value="ECO:0007669"/>
    <property type="project" value="UniProtKB-UniRule"/>
</dbReference>
<dbReference type="GO" id="GO:0016887">
    <property type="term" value="F:ATP hydrolysis activity"/>
    <property type="evidence" value="ECO:0007669"/>
    <property type="project" value="InterPro"/>
</dbReference>
<dbReference type="GO" id="GO:0005525">
    <property type="term" value="F:GTP binding"/>
    <property type="evidence" value="ECO:0007669"/>
    <property type="project" value="UniProtKB-UniRule"/>
</dbReference>
<dbReference type="GO" id="GO:0003924">
    <property type="term" value="F:GTPase activity"/>
    <property type="evidence" value="ECO:0007669"/>
    <property type="project" value="UniProtKB-UniRule"/>
</dbReference>
<dbReference type="GO" id="GO:0006614">
    <property type="term" value="P:SRP-dependent cotranslational protein targeting to membrane"/>
    <property type="evidence" value="ECO:0007669"/>
    <property type="project" value="InterPro"/>
</dbReference>
<dbReference type="CDD" id="cd17875">
    <property type="entry name" value="SRP54_G"/>
    <property type="match status" value="1"/>
</dbReference>
<dbReference type="Gene3D" id="3.40.50.300">
    <property type="entry name" value="P-loop containing nucleotide triphosphate hydrolases"/>
    <property type="match status" value="1"/>
</dbReference>
<dbReference type="Gene3D" id="1.20.120.140">
    <property type="entry name" value="Signal recognition particle SRP54, nucleotide-binding domain"/>
    <property type="match status" value="1"/>
</dbReference>
<dbReference type="Gene3D" id="1.10.260.30">
    <property type="entry name" value="Signal recognition particle, SRP54 subunit, M-domain"/>
    <property type="match status" value="1"/>
</dbReference>
<dbReference type="HAMAP" id="MF_00306">
    <property type="entry name" value="SRP54"/>
    <property type="match status" value="1"/>
</dbReference>
<dbReference type="InterPro" id="IPR003593">
    <property type="entry name" value="AAA+_ATPase"/>
</dbReference>
<dbReference type="InterPro" id="IPR027417">
    <property type="entry name" value="P-loop_NTPase"/>
</dbReference>
<dbReference type="InterPro" id="IPR036891">
    <property type="entry name" value="Signal_recog_part_SRP54_M_sf"/>
</dbReference>
<dbReference type="InterPro" id="IPR013822">
    <property type="entry name" value="Signal_recog_particl_SRP54_hlx"/>
</dbReference>
<dbReference type="InterPro" id="IPR004125">
    <property type="entry name" value="Signal_recog_particle_SRP54_M"/>
</dbReference>
<dbReference type="InterPro" id="IPR022941">
    <property type="entry name" value="SRP54"/>
</dbReference>
<dbReference type="InterPro" id="IPR000897">
    <property type="entry name" value="SRP54_GTPase_dom"/>
</dbReference>
<dbReference type="InterPro" id="IPR042101">
    <property type="entry name" value="SRP54_N_sf"/>
</dbReference>
<dbReference type="PANTHER" id="PTHR11564">
    <property type="entry name" value="SIGNAL RECOGNITION PARTICLE 54K PROTEIN SRP54"/>
    <property type="match status" value="1"/>
</dbReference>
<dbReference type="PANTHER" id="PTHR11564:SF5">
    <property type="entry name" value="SIGNAL RECOGNITION PARTICLE SUBUNIT SRP54"/>
    <property type="match status" value="1"/>
</dbReference>
<dbReference type="Pfam" id="PF00448">
    <property type="entry name" value="SRP54"/>
    <property type="match status" value="1"/>
</dbReference>
<dbReference type="Pfam" id="PF02881">
    <property type="entry name" value="SRP54_N"/>
    <property type="match status" value="1"/>
</dbReference>
<dbReference type="Pfam" id="PF02978">
    <property type="entry name" value="SRP_SPB"/>
    <property type="match status" value="1"/>
</dbReference>
<dbReference type="SMART" id="SM00382">
    <property type="entry name" value="AAA"/>
    <property type="match status" value="1"/>
</dbReference>
<dbReference type="SMART" id="SM00962">
    <property type="entry name" value="SRP54"/>
    <property type="match status" value="1"/>
</dbReference>
<dbReference type="SMART" id="SM00963">
    <property type="entry name" value="SRP54_N"/>
    <property type="match status" value="1"/>
</dbReference>
<dbReference type="SUPFAM" id="SSF52540">
    <property type="entry name" value="P-loop containing nucleoside triphosphate hydrolases"/>
    <property type="match status" value="1"/>
</dbReference>
<dbReference type="SUPFAM" id="SSF47446">
    <property type="entry name" value="Signal peptide-binding domain"/>
    <property type="match status" value="1"/>
</dbReference>